<gene>
    <name evidence="1" type="primary">rsmH</name>
    <name type="synonym">mraW</name>
    <name type="ordered locus">ECSE_0084</name>
</gene>
<sequence>MMENYKHTTVLLDEAVNGLNIRPDGIYIDGTFGRGGHSRLILSQLGEEGRLLAIDRDPQAIAVAKTIDDPRFSIIHGPFSALGEYVAERDLIGKIDGILLDLGVSSPQLDDAERGFSFMRDGPLDMRMDPTRGQSAAEWLQTAEEADIAWVLKTYGEERFAKRIARAIVERNREQPMTRTKELAEVVAAATPVKDKFKHPATRTFQAVRIWVNSELEEIEQALKSSLNVLAPGGRLSIISFHSLEDRIVKRFMRENSRGPQVPAGLPMTEEQLKKLGGRQLRALGKLMPGEEEVAENPRARSSVLRIAERTNA</sequence>
<feature type="chain" id="PRO_0000386873" description="Ribosomal RNA small subunit methyltransferase H">
    <location>
        <begin position="1"/>
        <end position="313"/>
    </location>
</feature>
<feature type="binding site" evidence="1">
    <location>
        <begin position="35"/>
        <end position="37"/>
    </location>
    <ligand>
        <name>S-adenosyl-L-methionine</name>
        <dbReference type="ChEBI" id="CHEBI:59789"/>
    </ligand>
</feature>
<feature type="binding site" evidence="1">
    <location>
        <position position="55"/>
    </location>
    <ligand>
        <name>S-adenosyl-L-methionine</name>
        <dbReference type="ChEBI" id="CHEBI:59789"/>
    </ligand>
</feature>
<feature type="binding site" evidence="1">
    <location>
        <position position="79"/>
    </location>
    <ligand>
        <name>S-adenosyl-L-methionine</name>
        <dbReference type="ChEBI" id="CHEBI:59789"/>
    </ligand>
</feature>
<feature type="binding site" evidence="1">
    <location>
        <position position="101"/>
    </location>
    <ligand>
        <name>S-adenosyl-L-methionine</name>
        <dbReference type="ChEBI" id="CHEBI:59789"/>
    </ligand>
</feature>
<feature type="binding site" evidence="1">
    <location>
        <position position="108"/>
    </location>
    <ligand>
        <name>S-adenosyl-L-methionine</name>
        <dbReference type="ChEBI" id="CHEBI:59789"/>
    </ligand>
</feature>
<reference key="1">
    <citation type="journal article" date="2008" name="DNA Res.">
        <title>Complete genome sequence and comparative analysis of the wild-type commensal Escherichia coli strain SE11 isolated from a healthy adult.</title>
        <authorList>
            <person name="Oshima K."/>
            <person name="Toh H."/>
            <person name="Ogura Y."/>
            <person name="Sasamoto H."/>
            <person name="Morita H."/>
            <person name="Park S.-H."/>
            <person name="Ooka T."/>
            <person name="Iyoda S."/>
            <person name="Taylor T.D."/>
            <person name="Hayashi T."/>
            <person name="Itoh K."/>
            <person name="Hattori M."/>
        </authorList>
    </citation>
    <scope>NUCLEOTIDE SEQUENCE [LARGE SCALE GENOMIC DNA]</scope>
    <source>
        <strain>SE11</strain>
    </source>
</reference>
<keyword id="KW-0963">Cytoplasm</keyword>
<keyword id="KW-0489">Methyltransferase</keyword>
<keyword id="KW-0698">rRNA processing</keyword>
<keyword id="KW-0949">S-adenosyl-L-methionine</keyword>
<keyword id="KW-0808">Transferase</keyword>
<evidence type="ECO:0000255" key="1">
    <source>
        <dbReference type="HAMAP-Rule" id="MF_01007"/>
    </source>
</evidence>
<comment type="function">
    <text evidence="1">Specifically methylates the N4 position of cytidine in position 1402 (C1402) of 16S rRNA.</text>
</comment>
<comment type="catalytic activity">
    <reaction evidence="1">
        <text>cytidine(1402) in 16S rRNA + S-adenosyl-L-methionine = N(4)-methylcytidine(1402) in 16S rRNA + S-adenosyl-L-homocysteine + H(+)</text>
        <dbReference type="Rhea" id="RHEA:42928"/>
        <dbReference type="Rhea" id="RHEA-COMP:10286"/>
        <dbReference type="Rhea" id="RHEA-COMP:10287"/>
        <dbReference type="ChEBI" id="CHEBI:15378"/>
        <dbReference type="ChEBI" id="CHEBI:57856"/>
        <dbReference type="ChEBI" id="CHEBI:59789"/>
        <dbReference type="ChEBI" id="CHEBI:74506"/>
        <dbReference type="ChEBI" id="CHEBI:82748"/>
        <dbReference type="EC" id="2.1.1.199"/>
    </reaction>
</comment>
<comment type="subcellular location">
    <subcellularLocation>
        <location evidence="1">Cytoplasm</location>
    </subcellularLocation>
</comment>
<comment type="similarity">
    <text evidence="1">Belongs to the methyltransferase superfamily. RsmH family.</text>
</comment>
<accession>B6HZ59</accession>
<proteinExistence type="inferred from homology"/>
<organism>
    <name type="scientific">Escherichia coli (strain SE11)</name>
    <dbReference type="NCBI Taxonomy" id="409438"/>
    <lineage>
        <taxon>Bacteria</taxon>
        <taxon>Pseudomonadati</taxon>
        <taxon>Pseudomonadota</taxon>
        <taxon>Gammaproteobacteria</taxon>
        <taxon>Enterobacterales</taxon>
        <taxon>Enterobacteriaceae</taxon>
        <taxon>Escherichia</taxon>
    </lineage>
</organism>
<protein>
    <recommendedName>
        <fullName evidence="1">Ribosomal RNA small subunit methyltransferase H</fullName>
        <ecNumber evidence="1">2.1.1.199</ecNumber>
    </recommendedName>
    <alternativeName>
        <fullName evidence="1">16S rRNA m(4)C1402 methyltransferase</fullName>
    </alternativeName>
    <alternativeName>
        <fullName evidence="1">rRNA (cytosine-N(4)-)-methyltransferase RsmH</fullName>
    </alternativeName>
</protein>
<dbReference type="EC" id="2.1.1.199" evidence="1"/>
<dbReference type="EMBL" id="AP009240">
    <property type="protein sequence ID" value="BAG75608.1"/>
    <property type="molecule type" value="Genomic_DNA"/>
</dbReference>
<dbReference type="RefSeq" id="WP_000970479.1">
    <property type="nucleotide sequence ID" value="NC_011415.1"/>
</dbReference>
<dbReference type="SMR" id="B6HZ59"/>
<dbReference type="GeneID" id="86862592"/>
<dbReference type="KEGG" id="ecy:ECSE_0084"/>
<dbReference type="HOGENOM" id="CLU_038422_2_0_6"/>
<dbReference type="Proteomes" id="UP000008199">
    <property type="component" value="Chromosome"/>
</dbReference>
<dbReference type="GO" id="GO:0005737">
    <property type="term" value="C:cytoplasm"/>
    <property type="evidence" value="ECO:0007669"/>
    <property type="project" value="UniProtKB-SubCell"/>
</dbReference>
<dbReference type="GO" id="GO:0071424">
    <property type="term" value="F:rRNA (cytosine-N4-)-methyltransferase activity"/>
    <property type="evidence" value="ECO:0007669"/>
    <property type="project" value="UniProtKB-UniRule"/>
</dbReference>
<dbReference type="GO" id="GO:0070475">
    <property type="term" value="P:rRNA base methylation"/>
    <property type="evidence" value="ECO:0007669"/>
    <property type="project" value="UniProtKB-UniRule"/>
</dbReference>
<dbReference type="FunFam" id="1.10.150.170:FF:000001">
    <property type="entry name" value="Ribosomal RNA small subunit methyltransferase H"/>
    <property type="match status" value="1"/>
</dbReference>
<dbReference type="Gene3D" id="1.10.150.170">
    <property type="entry name" value="Putative methyltransferase TM0872, insert domain"/>
    <property type="match status" value="1"/>
</dbReference>
<dbReference type="Gene3D" id="3.40.50.150">
    <property type="entry name" value="Vaccinia Virus protein VP39"/>
    <property type="match status" value="1"/>
</dbReference>
<dbReference type="HAMAP" id="MF_01007">
    <property type="entry name" value="16SrRNA_methyltr_H"/>
    <property type="match status" value="1"/>
</dbReference>
<dbReference type="InterPro" id="IPR002903">
    <property type="entry name" value="RsmH"/>
</dbReference>
<dbReference type="InterPro" id="IPR023397">
    <property type="entry name" value="SAM-dep_MeTrfase_MraW_recog"/>
</dbReference>
<dbReference type="InterPro" id="IPR029063">
    <property type="entry name" value="SAM-dependent_MTases_sf"/>
</dbReference>
<dbReference type="NCBIfam" id="TIGR00006">
    <property type="entry name" value="16S rRNA (cytosine(1402)-N(4))-methyltransferase RsmH"/>
    <property type="match status" value="1"/>
</dbReference>
<dbReference type="PANTHER" id="PTHR11265:SF0">
    <property type="entry name" value="12S RRNA N4-METHYLCYTIDINE METHYLTRANSFERASE"/>
    <property type="match status" value="1"/>
</dbReference>
<dbReference type="PANTHER" id="PTHR11265">
    <property type="entry name" value="S-ADENOSYL-METHYLTRANSFERASE MRAW"/>
    <property type="match status" value="1"/>
</dbReference>
<dbReference type="Pfam" id="PF01795">
    <property type="entry name" value="Methyltransf_5"/>
    <property type="match status" value="1"/>
</dbReference>
<dbReference type="PIRSF" id="PIRSF004486">
    <property type="entry name" value="MraW"/>
    <property type="match status" value="1"/>
</dbReference>
<dbReference type="SUPFAM" id="SSF81799">
    <property type="entry name" value="Putative methyltransferase TM0872, insert domain"/>
    <property type="match status" value="1"/>
</dbReference>
<dbReference type="SUPFAM" id="SSF53335">
    <property type="entry name" value="S-adenosyl-L-methionine-dependent methyltransferases"/>
    <property type="match status" value="1"/>
</dbReference>
<name>RSMH_ECOSE</name>